<proteinExistence type="inferred from homology"/>
<dbReference type="EC" id="2.8.1.13" evidence="1"/>
<dbReference type="EMBL" id="AE017220">
    <property type="protein sequence ID" value="AAX65091.1"/>
    <property type="status" value="ALT_INIT"/>
    <property type="molecule type" value="Genomic_DNA"/>
</dbReference>
<dbReference type="SMR" id="Q57QC0"/>
<dbReference type="KEGG" id="sec:SCH_1185"/>
<dbReference type="HOGENOM" id="CLU_035188_1_0_6"/>
<dbReference type="Proteomes" id="UP000000538">
    <property type="component" value="Chromosome"/>
</dbReference>
<dbReference type="GO" id="GO:0005737">
    <property type="term" value="C:cytoplasm"/>
    <property type="evidence" value="ECO:0007669"/>
    <property type="project" value="UniProtKB-SubCell"/>
</dbReference>
<dbReference type="GO" id="GO:0005524">
    <property type="term" value="F:ATP binding"/>
    <property type="evidence" value="ECO:0007669"/>
    <property type="project" value="UniProtKB-KW"/>
</dbReference>
<dbReference type="GO" id="GO:0000049">
    <property type="term" value="F:tRNA binding"/>
    <property type="evidence" value="ECO:0007669"/>
    <property type="project" value="UniProtKB-KW"/>
</dbReference>
<dbReference type="GO" id="GO:0103016">
    <property type="term" value="F:tRNA-uridine 2-sulfurtransferase activity"/>
    <property type="evidence" value="ECO:0007669"/>
    <property type="project" value="UniProtKB-EC"/>
</dbReference>
<dbReference type="GO" id="GO:0002143">
    <property type="term" value="P:tRNA wobble position uridine thiolation"/>
    <property type="evidence" value="ECO:0007669"/>
    <property type="project" value="TreeGrafter"/>
</dbReference>
<dbReference type="CDD" id="cd01998">
    <property type="entry name" value="MnmA_TRMU-like"/>
    <property type="match status" value="1"/>
</dbReference>
<dbReference type="FunFam" id="2.30.30.280:FF:000001">
    <property type="entry name" value="tRNA-specific 2-thiouridylase MnmA"/>
    <property type="match status" value="1"/>
</dbReference>
<dbReference type="FunFam" id="2.40.30.10:FF:000023">
    <property type="entry name" value="tRNA-specific 2-thiouridylase MnmA"/>
    <property type="match status" value="1"/>
</dbReference>
<dbReference type="FunFam" id="3.40.50.620:FF:000004">
    <property type="entry name" value="tRNA-specific 2-thiouridylase MnmA"/>
    <property type="match status" value="1"/>
</dbReference>
<dbReference type="Gene3D" id="2.30.30.280">
    <property type="entry name" value="Adenine nucleotide alpha hydrolases-like domains"/>
    <property type="match status" value="1"/>
</dbReference>
<dbReference type="Gene3D" id="3.40.50.620">
    <property type="entry name" value="HUPs"/>
    <property type="match status" value="1"/>
</dbReference>
<dbReference type="Gene3D" id="2.40.30.10">
    <property type="entry name" value="Translation factors"/>
    <property type="match status" value="1"/>
</dbReference>
<dbReference type="HAMAP" id="MF_00144">
    <property type="entry name" value="tRNA_thiouridyl_MnmA"/>
    <property type="match status" value="1"/>
</dbReference>
<dbReference type="InterPro" id="IPR004506">
    <property type="entry name" value="MnmA-like"/>
</dbReference>
<dbReference type="InterPro" id="IPR046885">
    <property type="entry name" value="MnmA-like_C"/>
</dbReference>
<dbReference type="InterPro" id="IPR046884">
    <property type="entry name" value="MnmA-like_central"/>
</dbReference>
<dbReference type="InterPro" id="IPR023382">
    <property type="entry name" value="MnmA-like_central_sf"/>
</dbReference>
<dbReference type="InterPro" id="IPR014729">
    <property type="entry name" value="Rossmann-like_a/b/a_fold"/>
</dbReference>
<dbReference type="NCBIfam" id="NF001138">
    <property type="entry name" value="PRK00143.1"/>
    <property type="match status" value="1"/>
</dbReference>
<dbReference type="NCBIfam" id="TIGR00420">
    <property type="entry name" value="trmU"/>
    <property type="match status" value="1"/>
</dbReference>
<dbReference type="PANTHER" id="PTHR11933:SF5">
    <property type="entry name" value="MITOCHONDRIAL TRNA-SPECIFIC 2-THIOURIDYLASE 1"/>
    <property type="match status" value="1"/>
</dbReference>
<dbReference type="PANTHER" id="PTHR11933">
    <property type="entry name" value="TRNA 5-METHYLAMINOMETHYL-2-THIOURIDYLATE -METHYLTRANSFERASE"/>
    <property type="match status" value="1"/>
</dbReference>
<dbReference type="Pfam" id="PF03054">
    <property type="entry name" value="tRNA_Me_trans"/>
    <property type="match status" value="1"/>
</dbReference>
<dbReference type="Pfam" id="PF20258">
    <property type="entry name" value="tRNA_Me_trans_C"/>
    <property type="match status" value="1"/>
</dbReference>
<dbReference type="Pfam" id="PF20259">
    <property type="entry name" value="tRNA_Me_trans_M"/>
    <property type="match status" value="1"/>
</dbReference>
<dbReference type="SUPFAM" id="SSF52402">
    <property type="entry name" value="Adenine nucleotide alpha hydrolases-like"/>
    <property type="match status" value="1"/>
</dbReference>
<protein>
    <recommendedName>
        <fullName evidence="1">tRNA-specific 2-thiouridylase MnmA</fullName>
        <ecNumber evidence="1">2.8.1.13</ecNumber>
    </recommendedName>
</protein>
<sequence>MSESPKKVIVGMSGGVDSSVSAWLLQQQGYQVEGLFMKNWEEDDGEEYCTAAADLADAQAVCDKLGIELHTVNFAAEYWDNVFELFLEEYKAGRTPNPDILCNKEIKFKAFLEFAAEDLGADYIATGHYVRRADVNGKSRLLRGLDGNKDQSYFLYTLGHEQIAQSLFPVGELEKPQVRKIAEDLGLVTAKKKDSTGICFIGERKFRDFLGRYLPAQPGKIITVDGDEIGEHQGLMYHTLGQRKGLGIGGTKDGTEDPWYVVDKDVENNVLIVAQGHEHPRLMSVGLIAQQLHWVDREPFTGTLRCTVKTRYRQTDIPCTINALDDDRIEVIFDEPVAAVTPGQSAVFYSGEVCLGGGIIEQRLPLTV</sequence>
<feature type="chain" id="PRO_0000121592" description="tRNA-specific 2-thiouridylase MnmA">
    <location>
        <begin position="1"/>
        <end position="368"/>
    </location>
</feature>
<feature type="region of interest" description="Interaction with target base in tRNA" evidence="1">
    <location>
        <begin position="97"/>
        <end position="99"/>
    </location>
</feature>
<feature type="region of interest" description="Interaction with tRNA" evidence="1">
    <location>
        <begin position="149"/>
        <end position="151"/>
    </location>
</feature>
<feature type="region of interest" description="Interaction with tRNA" evidence="1">
    <location>
        <begin position="311"/>
        <end position="312"/>
    </location>
</feature>
<feature type="active site" description="Nucleophile" evidence="1">
    <location>
        <position position="102"/>
    </location>
</feature>
<feature type="active site" description="Cysteine persulfide intermediate" evidence="1">
    <location>
        <position position="199"/>
    </location>
</feature>
<feature type="binding site" evidence="1">
    <location>
        <begin position="11"/>
        <end position="18"/>
    </location>
    <ligand>
        <name>ATP</name>
        <dbReference type="ChEBI" id="CHEBI:30616"/>
    </ligand>
</feature>
<feature type="binding site" evidence="1">
    <location>
        <position position="37"/>
    </location>
    <ligand>
        <name>ATP</name>
        <dbReference type="ChEBI" id="CHEBI:30616"/>
    </ligand>
</feature>
<feature type="binding site" evidence="1">
    <location>
        <position position="127"/>
    </location>
    <ligand>
        <name>ATP</name>
        <dbReference type="ChEBI" id="CHEBI:30616"/>
    </ligand>
</feature>
<feature type="site" description="Interaction with tRNA" evidence="1">
    <location>
        <position position="128"/>
    </location>
</feature>
<feature type="site" description="Interaction with tRNA" evidence="1">
    <location>
        <position position="344"/>
    </location>
</feature>
<feature type="disulfide bond" description="Alternate" evidence="1">
    <location>
        <begin position="102"/>
        <end position="199"/>
    </location>
</feature>
<name>MNMA_SALCH</name>
<reference key="1">
    <citation type="journal article" date="2005" name="Nucleic Acids Res.">
        <title>The genome sequence of Salmonella enterica serovar Choleraesuis, a highly invasive and resistant zoonotic pathogen.</title>
        <authorList>
            <person name="Chiu C.-H."/>
            <person name="Tang P."/>
            <person name="Chu C."/>
            <person name="Hu S."/>
            <person name="Bao Q."/>
            <person name="Yu J."/>
            <person name="Chou Y.-Y."/>
            <person name="Wang H.-S."/>
            <person name="Lee Y.-S."/>
        </authorList>
    </citation>
    <scope>NUCLEOTIDE SEQUENCE [LARGE SCALE GENOMIC DNA]</scope>
    <source>
        <strain>SC-B67</strain>
    </source>
</reference>
<evidence type="ECO:0000255" key="1">
    <source>
        <dbReference type="HAMAP-Rule" id="MF_00144"/>
    </source>
</evidence>
<evidence type="ECO:0000305" key="2"/>
<accession>Q57QC0</accession>
<comment type="function">
    <text evidence="1">Catalyzes the 2-thiolation of uridine at the wobble position (U34) of tRNA(Lys), tRNA(Glu) and tRNA(Gln), leading to the formation of s(2)U34, the first step of tRNA-mnm(5)s(2)U34 synthesis. Sulfur is provided by IscS, via a sulfur-relay system. Binds ATP and its substrate tRNAs.</text>
</comment>
<comment type="catalytic activity">
    <reaction evidence="1">
        <text>S-sulfanyl-L-cysteinyl-[protein] + uridine(34) in tRNA + AH2 + ATP = 2-thiouridine(34) in tRNA + L-cysteinyl-[protein] + A + AMP + diphosphate + H(+)</text>
        <dbReference type="Rhea" id="RHEA:47032"/>
        <dbReference type="Rhea" id="RHEA-COMP:10131"/>
        <dbReference type="Rhea" id="RHEA-COMP:11726"/>
        <dbReference type="Rhea" id="RHEA-COMP:11727"/>
        <dbReference type="Rhea" id="RHEA-COMP:11728"/>
        <dbReference type="ChEBI" id="CHEBI:13193"/>
        <dbReference type="ChEBI" id="CHEBI:15378"/>
        <dbReference type="ChEBI" id="CHEBI:17499"/>
        <dbReference type="ChEBI" id="CHEBI:29950"/>
        <dbReference type="ChEBI" id="CHEBI:30616"/>
        <dbReference type="ChEBI" id="CHEBI:33019"/>
        <dbReference type="ChEBI" id="CHEBI:61963"/>
        <dbReference type="ChEBI" id="CHEBI:65315"/>
        <dbReference type="ChEBI" id="CHEBI:87170"/>
        <dbReference type="ChEBI" id="CHEBI:456215"/>
        <dbReference type="EC" id="2.8.1.13"/>
    </reaction>
</comment>
<comment type="subunit">
    <text evidence="1">Interacts with TusE.</text>
</comment>
<comment type="subcellular location">
    <subcellularLocation>
        <location evidence="1">Cytoplasm</location>
    </subcellularLocation>
</comment>
<comment type="similarity">
    <text evidence="1">Belongs to the MnmA/TRMU family.</text>
</comment>
<comment type="sequence caution" evidence="2">
    <conflict type="erroneous initiation">
        <sequence resource="EMBL-CDS" id="AAX65091"/>
    </conflict>
</comment>
<organism>
    <name type="scientific">Salmonella choleraesuis (strain SC-B67)</name>
    <dbReference type="NCBI Taxonomy" id="321314"/>
    <lineage>
        <taxon>Bacteria</taxon>
        <taxon>Pseudomonadati</taxon>
        <taxon>Pseudomonadota</taxon>
        <taxon>Gammaproteobacteria</taxon>
        <taxon>Enterobacterales</taxon>
        <taxon>Enterobacteriaceae</taxon>
        <taxon>Salmonella</taxon>
    </lineage>
</organism>
<keyword id="KW-0067">ATP-binding</keyword>
<keyword id="KW-0963">Cytoplasm</keyword>
<keyword id="KW-1015">Disulfide bond</keyword>
<keyword id="KW-0547">Nucleotide-binding</keyword>
<keyword id="KW-0694">RNA-binding</keyword>
<keyword id="KW-0808">Transferase</keyword>
<keyword id="KW-0819">tRNA processing</keyword>
<keyword id="KW-0820">tRNA-binding</keyword>
<gene>
    <name evidence="1" type="primary">mnmA</name>
    <name type="synonym">trmU</name>
    <name type="ordered locus">SCH_1185</name>
</gene>